<name>ATL68_ARATH</name>
<protein>
    <recommendedName>
        <fullName>RING-H2 finger protein ATL68</fullName>
        <ecNumber evidence="5">2.3.2.27</ecNumber>
    </recommendedName>
    <alternativeName>
        <fullName evidence="5">RING-type E3 ubiquitin transferase ATL68</fullName>
    </alternativeName>
</protein>
<proteinExistence type="evidence at transcript level"/>
<sequence>MSTATLVVFPPPPPVPIPTYITSLGLGYSIAIALGFLVLISTIILSSYICCRASRLRFSASAANANANASFSDRGVIVPRIIFVAEDDDLESGNVVVGGLDHSVINSYPKFHFTKDITAVVNGDGFHDGEGRETTCSICLCEYMEEEMLRMMPECKHYFHVYCLDAWLKLNGSCPVCRNSPLPTPQSTPQSTPLSEVVPLSQYAADRRRSRR</sequence>
<dbReference type="EC" id="2.3.2.27" evidence="5"/>
<dbReference type="EMBL" id="AL132962">
    <property type="protein sequence ID" value="CAB71085.1"/>
    <property type="molecule type" value="Genomic_DNA"/>
</dbReference>
<dbReference type="EMBL" id="CP002686">
    <property type="protein sequence ID" value="AEE80221.1"/>
    <property type="molecule type" value="Genomic_DNA"/>
</dbReference>
<dbReference type="EMBL" id="AF428280">
    <property type="protein sequence ID" value="AAL16112.1"/>
    <property type="molecule type" value="mRNA"/>
</dbReference>
<dbReference type="EMBL" id="AY116968">
    <property type="protein sequence ID" value="AAM51602.1"/>
    <property type="molecule type" value="mRNA"/>
</dbReference>
<dbReference type="EMBL" id="AK221661">
    <property type="protein sequence ID" value="BAD95337.1"/>
    <property type="molecule type" value="mRNA"/>
</dbReference>
<dbReference type="PIR" id="T47947">
    <property type="entry name" value="T47947"/>
</dbReference>
<dbReference type="RefSeq" id="NP_191714.1">
    <property type="nucleotide sequence ID" value="NM_116020.3"/>
</dbReference>
<dbReference type="SMR" id="Q9M313"/>
<dbReference type="FunCoup" id="Q9M313">
    <property type="interactions" value="27"/>
</dbReference>
<dbReference type="GlyGen" id="Q9M313">
    <property type="glycosylation" value="1 site"/>
</dbReference>
<dbReference type="PaxDb" id="3702-AT3G61550.1"/>
<dbReference type="ProteomicsDB" id="246573"/>
<dbReference type="EnsemblPlants" id="AT3G61550.1">
    <property type="protein sequence ID" value="AT3G61550.1"/>
    <property type="gene ID" value="AT3G61550"/>
</dbReference>
<dbReference type="GeneID" id="825328"/>
<dbReference type="Gramene" id="AT3G61550.1">
    <property type="protein sequence ID" value="AT3G61550.1"/>
    <property type="gene ID" value="AT3G61550"/>
</dbReference>
<dbReference type="KEGG" id="ath:AT3G61550"/>
<dbReference type="Araport" id="AT3G61550"/>
<dbReference type="TAIR" id="AT3G61550">
    <property type="gene designation" value="ATL68"/>
</dbReference>
<dbReference type="eggNOG" id="KOG0800">
    <property type="taxonomic scope" value="Eukaryota"/>
</dbReference>
<dbReference type="HOGENOM" id="CLU_013137_15_4_1"/>
<dbReference type="InParanoid" id="Q9M313"/>
<dbReference type="OMA" id="HVYCLDA"/>
<dbReference type="PhylomeDB" id="Q9M313"/>
<dbReference type="UniPathway" id="UPA00143"/>
<dbReference type="PRO" id="PR:Q9M313"/>
<dbReference type="Proteomes" id="UP000006548">
    <property type="component" value="Chromosome 3"/>
</dbReference>
<dbReference type="ExpressionAtlas" id="Q9M313">
    <property type="expression patterns" value="baseline and differential"/>
</dbReference>
<dbReference type="GO" id="GO:0016020">
    <property type="term" value="C:membrane"/>
    <property type="evidence" value="ECO:0007669"/>
    <property type="project" value="UniProtKB-SubCell"/>
</dbReference>
<dbReference type="GO" id="GO:0016740">
    <property type="term" value="F:transferase activity"/>
    <property type="evidence" value="ECO:0007669"/>
    <property type="project" value="UniProtKB-KW"/>
</dbReference>
<dbReference type="GO" id="GO:0008270">
    <property type="term" value="F:zinc ion binding"/>
    <property type="evidence" value="ECO:0007669"/>
    <property type="project" value="UniProtKB-KW"/>
</dbReference>
<dbReference type="GO" id="GO:0016567">
    <property type="term" value="P:protein ubiquitination"/>
    <property type="evidence" value="ECO:0007669"/>
    <property type="project" value="UniProtKB-UniPathway"/>
</dbReference>
<dbReference type="Gene3D" id="3.30.40.10">
    <property type="entry name" value="Zinc/RING finger domain, C3HC4 (zinc finger)"/>
    <property type="match status" value="1"/>
</dbReference>
<dbReference type="InterPro" id="IPR044289">
    <property type="entry name" value="ATL67-70"/>
</dbReference>
<dbReference type="InterPro" id="IPR001841">
    <property type="entry name" value="Znf_RING"/>
</dbReference>
<dbReference type="InterPro" id="IPR013083">
    <property type="entry name" value="Znf_RING/FYVE/PHD"/>
</dbReference>
<dbReference type="PANTHER" id="PTHR46592">
    <property type="entry name" value="RING-H2 FINGER PROTEIN ATL67"/>
    <property type="match status" value="1"/>
</dbReference>
<dbReference type="PANTHER" id="PTHR46592:SF9">
    <property type="entry name" value="RING-H2 FINGER PROTEIN ATL68"/>
    <property type="match status" value="1"/>
</dbReference>
<dbReference type="Pfam" id="PF13639">
    <property type="entry name" value="zf-RING_2"/>
    <property type="match status" value="1"/>
</dbReference>
<dbReference type="SMART" id="SM00184">
    <property type="entry name" value="RING"/>
    <property type="match status" value="1"/>
</dbReference>
<dbReference type="SUPFAM" id="SSF57850">
    <property type="entry name" value="RING/U-box"/>
    <property type="match status" value="1"/>
</dbReference>
<dbReference type="PROSITE" id="PS50089">
    <property type="entry name" value="ZF_RING_2"/>
    <property type="match status" value="1"/>
</dbReference>
<feature type="chain" id="PRO_0000055796" description="RING-H2 finger protein ATL68">
    <location>
        <begin position="1"/>
        <end position="212"/>
    </location>
</feature>
<feature type="transmembrane region" description="Helical" evidence="2">
    <location>
        <begin position="24"/>
        <end position="44"/>
    </location>
</feature>
<feature type="zinc finger region" description="RING-type; atypical" evidence="3">
    <location>
        <begin position="136"/>
        <end position="178"/>
    </location>
</feature>
<feature type="region of interest" description="Disordered" evidence="4">
    <location>
        <begin position="182"/>
        <end position="212"/>
    </location>
</feature>
<feature type="compositionally biased region" description="Low complexity" evidence="4">
    <location>
        <begin position="185"/>
        <end position="195"/>
    </location>
</feature>
<accession>Q9M313</accession>
<gene>
    <name type="primary">ATL68</name>
    <name type="ordered locus">At3g61550</name>
    <name type="ORF">F2A19.150</name>
</gene>
<reference key="1">
    <citation type="journal article" date="2000" name="Nature">
        <title>Sequence and analysis of chromosome 3 of the plant Arabidopsis thaliana.</title>
        <authorList>
            <person name="Salanoubat M."/>
            <person name="Lemcke K."/>
            <person name="Rieger M."/>
            <person name="Ansorge W."/>
            <person name="Unseld M."/>
            <person name="Fartmann B."/>
            <person name="Valle G."/>
            <person name="Bloecker H."/>
            <person name="Perez-Alonso M."/>
            <person name="Obermaier B."/>
            <person name="Delseny M."/>
            <person name="Boutry M."/>
            <person name="Grivell L.A."/>
            <person name="Mache R."/>
            <person name="Puigdomenech P."/>
            <person name="De Simone V."/>
            <person name="Choisne N."/>
            <person name="Artiguenave F."/>
            <person name="Robert C."/>
            <person name="Brottier P."/>
            <person name="Wincker P."/>
            <person name="Cattolico L."/>
            <person name="Weissenbach J."/>
            <person name="Saurin W."/>
            <person name="Quetier F."/>
            <person name="Schaefer M."/>
            <person name="Mueller-Auer S."/>
            <person name="Gabel C."/>
            <person name="Fuchs M."/>
            <person name="Benes V."/>
            <person name="Wurmbach E."/>
            <person name="Drzonek H."/>
            <person name="Erfle H."/>
            <person name="Jordan N."/>
            <person name="Bangert S."/>
            <person name="Wiedelmann R."/>
            <person name="Kranz H."/>
            <person name="Voss H."/>
            <person name="Holland R."/>
            <person name="Brandt P."/>
            <person name="Nyakatura G."/>
            <person name="Vezzi A."/>
            <person name="D'Angelo M."/>
            <person name="Pallavicini A."/>
            <person name="Toppo S."/>
            <person name="Simionati B."/>
            <person name="Conrad A."/>
            <person name="Hornischer K."/>
            <person name="Kauer G."/>
            <person name="Loehnert T.-H."/>
            <person name="Nordsiek G."/>
            <person name="Reichelt J."/>
            <person name="Scharfe M."/>
            <person name="Schoen O."/>
            <person name="Bargues M."/>
            <person name="Terol J."/>
            <person name="Climent J."/>
            <person name="Navarro P."/>
            <person name="Collado C."/>
            <person name="Perez-Perez A."/>
            <person name="Ottenwaelder B."/>
            <person name="Duchemin D."/>
            <person name="Cooke R."/>
            <person name="Laudie M."/>
            <person name="Berger-Llauro C."/>
            <person name="Purnelle B."/>
            <person name="Masuy D."/>
            <person name="de Haan M."/>
            <person name="Maarse A.C."/>
            <person name="Alcaraz J.-P."/>
            <person name="Cottet A."/>
            <person name="Casacuberta E."/>
            <person name="Monfort A."/>
            <person name="Argiriou A."/>
            <person name="Flores M."/>
            <person name="Liguori R."/>
            <person name="Vitale D."/>
            <person name="Mannhaupt G."/>
            <person name="Haase D."/>
            <person name="Schoof H."/>
            <person name="Rudd S."/>
            <person name="Zaccaria P."/>
            <person name="Mewes H.-W."/>
            <person name="Mayer K.F.X."/>
            <person name="Kaul S."/>
            <person name="Town C.D."/>
            <person name="Koo H.L."/>
            <person name="Tallon L.J."/>
            <person name="Jenkins J."/>
            <person name="Rooney T."/>
            <person name="Rizzo M."/>
            <person name="Walts A."/>
            <person name="Utterback T."/>
            <person name="Fujii C.Y."/>
            <person name="Shea T.P."/>
            <person name="Creasy T.H."/>
            <person name="Haas B."/>
            <person name="Maiti R."/>
            <person name="Wu D."/>
            <person name="Peterson J."/>
            <person name="Van Aken S."/>
            <person name="Pai G."/>
            <person name="Militscher J."/>
            <person name="Sellers P."/>
            <person name="Gill J.E."/>
            <person name="Feldblyum T.V."/>
            <person name="Preuss D."/>
            <person name="Lin X."/>
            <person name="Nierman W.C."/>
            <person name="Salzberg S.L."/>
            <person name="White O."/>
            <person name="Venter J.C."/>
            <person name="Fraser C.M."/>
            <person name="Kaneko T."/>
            <person name="Nakamura Y."/>
            <person name="Sato S."/>
            <person name="Kato T."/>
            <person name="Asamizu E."/>
            <person name="Sasamoto S."/>
            <person name="Kimura T."/>
            <person name="Idesawa K."/>
            <person name="Kawashima K."/>
            <person name="Kishida Y."/>
            <person name="Kiyokawa C."/>
            <person name="Kohara M."/>
            <person name="Matsumoto M."/>
            <person name="Matsuno A."/>
            <person name="Muraki A."/>
            <person name="Nakayama S."/>
            <person name="Nakazaki N."/>
            <person name="Shinpo S."/>
            <person name="Takeuchi C."/>
            <person name="Wada T."/>
            <person name="Watanabe A."/>
            <person name="Yamada M."/>
            <person name="Yasuda M."/>
            <person name="Tabata S."/>
        </authorList>
    </citation>
    <scope>NUCLEOTIDE SEQUENCE [LARGE SCALE GENOMIC DNA]</scope>
    <source>
        <strain>cv. Columbia</strain>
    </source>
</reference>
<reference key="2">
    <citation type="journal article" date="2017" name="Plant J.">
        <title>Araport11: a complete reannotation of the Arabidopsis thaliana reference genome.</title>
        <authorList>
            <person name="Cheng C.Y."/>
            <person name="Krishnakumar V."/>
            <person name="Chan A.P."/>
            <person name="Thibaud-Nissen F."/>
            <person name="Schobel S."/>
            <person name="Town C.D."/>
        </authorList>
    </citation>
    <scope>GENOME REANNOTATION</scope>
    <source>
        <strain>cv. Columbia</strain>
    </source>
</reference>
<reference key="3">
    <citation type="journal article" date="2003" name="Science">
        <title>Empirical analysis of transcriptional activity in the Arabidopsis genome.</title>
        <authorList>
            <person name="Yamada K."/>
            <person name="Lim J."/>
            <person name="Dale J.M."/>
            <person name="Chen H."/>
            <person name="Shinn P."/>
            <person name="Palm C.J."/>
            <person name="Southwick A.M."/>
            <person name="Wu H.C."/>
            <person name="Kim C.J."/>
            <person name="Nguyen M."/>
            <person name="Pham P.K."/>
            <person name="Cheuk R.F."/>
            <person name="Karlin-Newmann G."/>
            <person name="Liu S.X."/>
            <person name="Lam B."/>
            <person name="Sakano H."/>
            <person name="Wu T."/>
            <person name="Yu G."/>
            <person name="Miranda M."/>
            <person name="Quach H.L."/>
            <person name="Tripp M."/>
            <person name="Chang C.H."/>
            <person name="Lee J.M."/>
            <person name="Toriumi M.J."/>
            <person name="Chan M.M."/>
            <person name="Tang C.C."/>
            <person name="Onodera C.S."/>
            <person name="Deng J.M."/>
            <person name="Akiyama K."/>
            <person name="Ansari Y."/>
            <person name="Arakawa T."/>
            <person name="Banh J."/>
            <person name="Banno F."/>
            <person name="Bowser L."/>
            <person name="Brooks S.Y."/>
            <person name="Carninci P."/>
            <person name="Chao Q."/>
            <person name="Choy N."/>
            <person name="Enju A."/>
            <person name="Goldsmith A.D."/>
            <person name="Gurjal M."/>
            <person name="Hansen N.F."/>
            <person name="Hayashizaki Y."/>
            <person name="Johnson-Hopson C."/>
            <person name="Hsuan V.W."/>
            <person name="Iida K."/>
            <person name="Karnes M."/>
            <person name="Khan S."/>
            <person name="Koesema E."/>
            <person name="Ishida J."/>
            <person name="Jiang P.X."/>
            <person name="Jones T."/>
            <person name="Kawai J."/>
            <person name="Kamiya A."/>
            <person name="Meyers C."/>
            <person name="Nakajima M."/>
            <person name="Narusaka M."/>
            <person name="Seki M."/>
            <person name="Sakurai T."/>
            <person name="Satou M."/>
            <person name="Tamse R."/>
            <person name="Vaysberg M."/>
            <person name="Wallender E.K."/>
            <person name="Wong C."/>
            <person name="Yamamura Y."/>
            <person name="Yuan S."/>
            <person name="Shinozaki K."/>
            <person name="Davis R.W."/>
            <person name="Theologis A."/>
            <person name="Ecker J.R."/>
        </authorList>
    </citation>
    <scope>NUCLEOTIDE SEQUENCE [LARGE SCALE MRNA]</scope>
    <source>
        <strain>cv. Columbia</strain>
    </source>
</reference>
<reference key="4">
    <citation type="submission" date="2005-03" db="EMBL/GenBank/DDBJ databases">
        <title>Large-scale analysis of RIKEN Arabidopsis full-length (RAFL) cDNAs.</title>
        <authorList>
            <person name="Totoki Y."/>
            <person name="Seki M."/>
            <person name="Ishida J."/>
            <person name="Nakajima M."/>
            <person name="Enju A."/>
            <person name="Kamiya A."/>
            <person name="Narusaka M."/>
            <person name="Shin-i T."/>
            <person name="Nakagawa M."/>
            <person name="Sakamoto N."/>
            <person name="Oishi K."/>
            <person name="Kohara Y."/>
            <person name="Kobayashi M."/>
            <person name="Toyoda A."/>
            <person name="Sakaki Y."/>
            <person name="Sakurai T."/>
            <person name="Iida K."/>
            <person name="Akiyama K."/>
            <person name="Satou M."/>
            <person name="Toyoda T."/>
            <person name="Konagaya A."/>
            <person name="Carninci P."/>
            <person name="Kawai J."/>
            <person name="Hayashizaki Y."/>
            <person name="Shinozaki K."/>
        </authorList>
    </citation>
    <scope>NUCLEOTIDE SEQUENCE [LARGE SCALE MRNA]</scope>
    <source>
        <strain>cv. Columbia</strain>
    </source>
</reference>
<reference key="5">
    <citation type="journal article" date="2002" name="Genome Biol.">
        <title>Evaluation and classification of RING-finger domains encoded by the Arabidopsis genome.</title>
        <authorList>
            <person name="Kosarev P."/>
            <person name="Mayer K.F.X."/>
            <person name="Hardtke C.S."/>
        </authorList>
    </citation>
    <scope>GENE FAMILY ORGANIZATION</scope>
</reference>
<reference key="6">
    <citation type="journal article" date="2006" name="J. Mol. Evol.">
        <title>The ATL gene family from Arabidopsis thaliana and Oryza sativa comprises a large number of putative ubiquitin ligases of the RING-H2 type.</title>
        <authorList>
            <person name="Serrano M."/>
            <person name="Parra S."/>
            <person name="Alcaraz L.D."/>
            <person name="Guzman P."/>
        </authorList>
    </citation>
    <scope>NOMENCLATURE</scope>
    <scope>GENE FAMILY ORGANIZATION</scope>
</reference>
<evidence type="ECO:0000250" key="1"/>
<evidence type="ECO:0000255" key="2"/>
<evidence type="ECO:0000255" key="3">
    <source>
        <dbReference type="PROSITE-ProRule" id="PRU00175"/>
    </source>
</evidence>
<evidence type="ECO:0000256" key="4">
    <source>
        <dbReference type="SAM" id="MobiDB-lite"/>
    </source>
</evidence>
<evidence type="ECO:0000305" key="5"/>
<organism>
    <name type="scientific">Arabidopsis thaliana</name>
    <name type="common">Mouse-ear cress</name>
    <dbReference type="NCBI Taxonomy" id="3702"/>
    <lineage>
        <taxon>Eukaryota</taxon>
        <taxon>Viridiplantae</taxon>
        <taxon>Streptophyta</taxon>
        <taxon>Embryophyta</taxon>
        <taxon>Tracheophyta</taxon>
        <taxon>Spermatophyta</taxon>
        <taxon>Magnoliopsida</taxon>
        <taxon>eudicotyledons</taxon>
        <taxon>Gunneridae</taxon>
        <taxon>Pentapetalae</taxon>
        <taxon>rosids</taxon>
        <taxon>malvids</taxon>
        <taxon>Brassicales</taxon>
        <taxon>Brassicaceae</taxon>
        <taxon>Camelineae</taxon>
        <taxon>Arabidopsis</taxon>
    </lineage>
</organism>
<keyword id="KW-0472">Membrane</keyword>
<keyword id="KW-0479">Metal-binding</keyword>
<keyword id="KW-1185">Reference proteome</keyword>
<keyword id="KW-0808">Transferase</keyword>
<keyword id="KW-0812">Transmembrane</keyword>
<keyword id="KW-1133">Transmembrane helix</keyword>
<keyword id="KW-0833">Ubl conjugation pathway</keyword>
<keyword id="KW-0862">Zinc</keyword>
<keyword id="KW-0863">Zinc-finger</keyword>
<comment type="catalytic activity">
    <reaction evidence="5">
        <text>S-ubiquitinyl-[E2 ubiquitin-conjugating enzyme]-L-cysteine + [acceptor protein]-L-lysine = [E2 ubiquitin-conjugating enzyme]-L-cysteine + N(6)-ubiquitinyl-[acceptor protein]-L-lysine.</text>
        <dbReference type="EC" id="2.3.2.27"/>
    </reaction>
</comment>
<comment type="pathway">
    <text>Protein modification; protein ubiquitination.</text>
</comment>
<comment type="subcellular location">
    <subcellularLocation>
        <location evidence="5">Membrane</location>
        <topology evidence="5">Single-pass membrane protein</topology>
    </subcellularLocation>
</comment>
<comment type="domain">
    <text evidence="1">The RING-type zinc finger domain mediates binding to an E2 ubiquitin-conjugating enzyme.</text>
</comment>
<comment type="similarity">
    <text evidence="5">Belongs to the RING-type zinc finger family. ATL subfamily.</text>
</comment>